<organism>
    <name type="scientific">Caenorhabditis elegans</name>
    <dbReference type="NCBI Taxonomy" id="6239"/>
    <lineage>
        <taxon>Eukaryota</taxon>
        <taxon>Metazoa</taxon>
        <taxon>Ecdysozoa</taxon>
        <taxon>Nematoda</taxon>
        <taxon>Chromadorea</taxon>
        <taxon>Rhabditida</taxon>
        <taxon>Rhabditina</taxon>
        <taxon>Rhabditomorpha</taxon>
        <taxon>Rhabditoidea</taxon>
        <taxon>Rhabditidae</taxon>
        <taxon>Peloderinae</taxon>
        <taxon>Caenorhabditis</taxon>
    </lineage>
</organism>
<feature type="chain" id="PRO_0000065253" description="Uncharacterized protein C50C3.1">
    <location>
        <begin position="1"/>
        <end position="322"/>
    </location>
</feature>
<feature type="zinc finger region" description="C3H1-type" evidence="1">
    <location>
        <begin position="245"/>
        <end position="274"/>
    </location>
</feature>
<feature type="region of interest" description="Disordered" evidence="2">
    <location>
        <begin position="1"/>
        <end position="63"/>
    </location>
</feature>
<feature type="region of interest" description="Disordered" evidence="2">
    <location>
        <begin position="278"/>
        <end position="322"/>
    </location>
</feature>
<feature type="compositionally biased region" description="Basic and acidic residues" evidence="2">
    <location>
        <begin position="34"/>
        <end position="49"/>
    </location>
</feature>
<feature type="compositionally biased region" description="Basic residues" evidence="2">
    <location>
        <begin position="309"/>
        <end position="322"/>
    </location>
</feature>
<accession>P34366</accession>
<gene>
    <name type="ORF">C50C3.1</name>
</gene>
<dbReference type="EMBL" id="FO080718">
    <property type="protein sequence ID" value="CCD66128.1"/>
    <property type="molecule type" value="Genomic_DNA"/>
</dbReference>
<dbReference type="PIR" id="S44620">
    <property type="entry name" value="S44620"/>
</dbReference>
<dbReference type="RefSeq" id="NP_498788.3">
    <property type="nucleotide sequence ID" value="NM_066387.8"/>
</dbReference>
<dbReference type="FunCoup" id="P34366">
    <property type="interactions" value="1371"/>
</dbReference>
<dbReference type="STRING" id="6239.C50C3.1.2"/>
<dbReference type="PaxDb" id="6239-C50C3.1"/>
<dbReference type="EnsemblMetazoa" id="C50C3.1.1">
    <property type="protein sequence ID" value="C50C3.1.1"/>
    <property type="gene ID" value="WBGene00016799"/>
</dbReference>
<dbReference type="GeneID" id="183641"/>
<dbReference type="KEGG" id="cel:CELE_C50C3.1"/>
<dbReference type="UCSC" id="C50C3.1">
    <property type="organism name" value="c. elegans"/>
</dbReference>
<dbReference type="AGR" id="WB:WBGene00016799"/>
<dbReference type="CTD" id="183641"/>
<dbReference type="WormBase" id="C50C3.1">
    <property type="protein sequence ID" value="CE42567"/>
    <property type="gene ID" value="WBGene00016799"/>
</dbReference>
<dbReference type="eggNOG" id="ENOG502THTM">
    <property type="taxonomic scope" value="Eukaryota"/>
</dbReference>
<dbReference type="HOGENOM" id="CLU_863907_0_0_1"/>
<dbReference type="InParanoid" id="P34366"/>
<dbReference type="OMA" id="CRFEHDD"/>
<dbReference type="OrthoDB" id="5776165at2759"/>
<dbReference type="PRO" id="PR:P34366"/>
<dbReference type="Proteomes" id="UP000001940">
    <property type="component" value="Chromosome III"/>
</dbReference>
<dbReference type="Bgee" id="WBGene00016799">
    <property type="expression patterns" value="Expressed in germ line (C elegans) and 4 other cell types or tissues"/>
</dbReference>
<dbReference type="GO" id="GO:0008270">
    <property type="term" value="F:zinc ion binding"/>
    <property type="evidence" value="ECO:0007669"/>
    <property type="project" value="UniProtKB-KW"/>
</dbReference>
<dbReference type="Gene3D" id="4.10.1000.10">
    <property type="entry name" value="Zinc finger, CCCH-type"/>
    <property type="match status" value="1"/>
</dbReference>
<dbReference type="InterPro" id="IPR041367">
    <property type="entry name" value="Znf-CCCH_4"/>
</dbReference>
<dbReference type="InterPro" id="IPR000571">
    <property type="entry name" value="Znf_CCCH"/>
</dbReference>
<dbReference type="Pfam" id="PF18044">
    <property type="entry name" value="zf-CCCH_4"/>
    <property type="match status" value="1"/>
</dbReference>
<dbReference type="PROSITE" id="PS50103">
    <property type="entry name" value="ZF_C3H1"/>
    <property type="match status" value="1"/>
</dbReference>
<sequence length="322" mass="37139">MFKIRKRSVPKETLKGILRKSPSKTSKVSQKVGFVDDHGKPIAEYRDFPADEGDEASSSDSHYEKKAPLVINRSGDYQINRMKWVVYSVKNVKKQNDEPSEMRIMEENRLTENNISRAPLFGTFDALDSPNLTTDAIIRARTPVPIITSGSSPDIPQCVSPVQNTYQQIFENNTDTSDEVQDFSIPPPPYPSSFPAPTTPLLALMSQLKQRGIISGEQNNQPLDNVNPMPQQFDRRPSRWTQGSWKVDRICTYYINRPDKCTRGDNCRFKHDDVEREHRQKEIQSSRNQSWHHRTSSHKYSSENSDHRGYRRHRSRSPHARQ</sequence>
<reference key="1">
    <citation type="journal article" date="1994" name="Nature">
        <title>2.2 Mb of contiguous nucleotide sequence from chromosome III of C. elegans.</title>
        <authorList>
            <person name="Wilson R."/>
            <person name="Ainscough R."/>
            <person name="Anderson K."/>
            <person name="Baynes C."/>
            <person name="Berks M."/>
            <person name="Bonfield J."/>
            <person name="Burton J."/>
            <person name="Connell M."/>
            <person name="Copsey T."/>
            <person name="Cooper J."/>
            <person name="Coulson A."/>
            <person name="Craxton M."/>
            <person name="Dear S."/>
            <person name="Du Z."/>
            <person name="Durbin R."/>
            <person name="Favello A."/>
            <person name="Fraser A."/>
            <person name="Fulton L."/>
            <person name="Gardner A."/>
            <person name="Green P."/>
            <person name="Hawkins T."/>
            <person name="Hillier L."/>
            <person name="Jier M."/>
            <person name="Johnston L."/>
            <person name="Jones M."/>
            <person name="Kershaw J."/>
            <person name="Kirsten J."/>
            <person name="Laisster N."/>
            <person name="Latreille P."/>
            <person name="Lightning J."/>
            <person name="Lloyd C."/>
            <person name="Mortimore B."/>
            <person name="O'Callaghan M."/>
            <person name="Parsons J."/>
            <person name="Percy C."/>
            <person name="Rifken L."/>
            <person name="Roopra A."/>
            <person name="Saunders D."/>
            <person name="Shownkeen R."/>
            <person name="Sims M."/>
            <person name="Smaldon N."/>
            <person name="Smith A."/>
            <person name="Smith M."/>
            <person name="Sonnhammer E."/>
            <person name="Staden R."/>
            <person name="Sulston J."/>
            <person name="Thierry-Mieg J."/>
            <person name="Thomas K."/>
            <person name="Vaudin M."/>
            <person name="Vaughan K."/>
            <person name="Waterston R."/>
            <person name="Watson A."/>
            <person name="Weinstock L."/>
            <person name="Wilkinson-Sproat J."/>
            <person name="Wohldman P."/>
        </authorList>
    </citation>
    <scope>NUCLEOTIDE SEQUENCE [LARGE SCALE GENOMIC DNA]</scope>
    <source>
        <strain>Bristol N2</strain>
    </source>
</reference>
<reference key="2">
    <citation type="journal article" date="1998" name="Science">
        <title>Genome sequence of the nematode C. elegans: a platform for investigating biology.</title>
        <authorList>
            <consortium name="The C. elegans sequencing consortium"/>
        </authorList>
    </citation>
    <scope>NUCLEOTIDE SEQUENCE [LARGE SCALE GENOMIC DNA]</scope>
    <source>
        <strain>Bristol N2</strain>
    </source>
</reference>
<name>YLJ1_CAEEL</name>
<evidence type="ECO:0000255" key="1">
    <source>
        <dbReference type="PROSITE-ProRule" id="PRU00723"/>
    </source>
</evidence>
<evidence type="ECO:0000256" key="2">
    <source>
        <dbReference type="SAM" id="MobiDB-lite"/>
    </source>
</evidence>
<protein>
    <recommendedName>
        <fullName>Uncharacterized protein C50C3.1</fullName>
    </recommendedName>
</protein>
<keyword id="KW-0479">Metal-binding</keyword>
<keyword id="KW-1185">Reference proteome</keyword>
<keyword id="KW-0862">Zinc</keyword>
<keyword id="KW-0863">Zinc-finger</keyword>
<proteinExistence type="predicted"/>